<organism>
    <name type="scientific">Buchnera aphidicola subsp. Schizaphis graminum (strain Sg)</name>
    <dbReference type="NCBI Taxonomy" id="198804"/>
    <lineage>
        <taxon>Bacteria</taxon>
        <taxon>Pseudomonadati</taxon>
        <taxon>Pseudomonadota</taxon>
        <taxon>Gammaproteobacteria</taxon>
        <taxon>Enterobacterales</taxon>
        <taxon>Erwiniaceae</taxon>
        <taxon>Buchnera</taxon>
    </lineage>
</organism>
<comment type="subcellular location">
    <subcellularLocation>
        <location evidence="2">Cell membrane</location>
        <topology evidence="2">Multi-pass membrane protein</topology>
    </subcellularLocation>
</comment>
<comment type="similarity">
    <text evidence="2">Belongs to the TerC family.</text>
</comment>
<feature type="chain" id="PRO_0000103417" description="Uncharacterized membrane protein BUsg_160">
    <location>
        <begin position="1"/>
        <end position="310"/>
    </location>
</feature>
<feature type="transmembrane region" description="Helical" evidence="1">
    <location>
        <begin position="1"/>
        <end position="21"/>
    </location>
</feature>
<feature type="transmembrane region" description="Helical" evidence="1">
    <location>
        <begin position="38"/>
        <end position="58"/>
    </location>
</feature>
<feature type="transmembrane region" description="Helical" evidence="1">
    <location>
        <begin position="74"/>
        <end position="94"/>
    </location>
</feature>
<feature type="transmembrane region" description="Helical" evidence="1">
    <location>
        <begin position="110"/>
        <end position="130"/>
    </location>
</feature>
<feature type="transmembrane region" description="Helical" evidence="1">
    <location>
        <begin position="135"/>
        <end position="155"/>
    </location>
</feature>
<feature type="transmembrane region" description="Helical" evidence="1">
    <location>
        <begin position="194"/>
        <end position="214"/>
    </location>
</feature>
<feature type="transmembrane region" description="Helical" evidence="1">
    <location>
        <begin position="228"/>
        <end position="248"/>
    </location>
</feature>
<feature type="transmembrane region" description="Helical" evidence="1">
    <location>
        <begin position="256"/>
        <end position="276"/>
    </location>
</feature>
<feature type="transmembrane region" description="Helical" evidence="1">
    <location>
        <begin position="284"/>
        <end position="304"/>
    </location>
</feature>
<proteinExistence type="inferred from homology"/>
<reference key="1">
    <citation type="journal article" date="2002" name="Science">
        <title>50 million years of genomic stasis in endosymbiotic bacteria.</title>
        <authorList>
            <person name="Tamas I."/>
            <person name="Klasson L."/>
            <person name="Canbaeck B."/>
            <person name="Naeslund A.K."/>
            <person name="Eriksson A.-S."/>
            <person name="Wernegreen J.J."/>
            <person name="Sandstroem J.P."/>
            <person name="Moran N.A."/>
            <person name="Andersson S.G.E."/>
        </authorList>
    </citation>
    <scope>NUCLEOTIDE SEQUENCE [LARGE SCALE GENOMIC DNA]</scope>
    <source>
        <strain>Sg</strain>
    </source>
</reference>
<keyword id="KW-1003">Cell membrane</keyword>
<keyword id="KW-0472">Membrane</keyword>
<keyword id="KW-0812">Transmembrane</keyword>
<keyword id="KW-1133">Transmembrane helix</keyword>
<gene>
    <name type="ordered locus">BUsg_160</name>
</gene>
<evidence type="ECO:0000255" key="1"/>
<evidence type="ECO:0000305" key="2"/>
<dbReference type="EMBL" id="AE013218">
    <property type="protein sequence ID" value="AAM67728.1"/>
    <property type="molecule type" value="Genomic_DNA"/>
</dbReference>
<dbReference type="SMR" id="Q8K9X4"/>
<dbReference type="STRING" id="198804.BUsg_160"/>
<dbReference type="KEGG" id="bas:BUsg_160"/>
<dbReference type="eggNOG" id="COG0861">
    <property type="taxonomic scope" value="Bacteria"/>
</dbReference>
<dbReference type="HOGENOM" id="CLU_045644_1_2_6"/>
<dbReference type="Proteomes" id="UP000000416">
    <property type="component" value="Chromosome"/>
</dbReference>
<dbReference type="GO" id="GO:0005886">
    <property type="term" value="C:plasma membrane"/>
    <property type="evidence" value="ECO:0007669"/>
    <property type="project" value="UniProtKB-SubCell"/>
</dbReference>
<dbReference type="InterPro" id="IPR005496">
    <property type="entry name" value="Integral_membrane_TerC"/>
</dbReference>
<dbReference type="PANTHER" id="PTHR30238">
    <property type="entry name" value="MEMBRANE BOUND PREDICTED REDOX MODULATOR"/>
    <property type="match status" value="1"/>
</dbReference>
<dbReference type="PANTHER" id="PTHR30238:SF0">
    <property type="entry name" value="THYLAKOID MEMBRANE PROTEIN TERC, CHLOROPLASTIC"/>
    <property type="match status" value="1"/>
</dbReference>
<dbReference type="Pfam" id="PF03741">
    <property type="entry name" value="TerC"/>
    <property type="match status" value="1"/>
</dbReference>
<accession>Q8K9X4</accession>
<sequence length="310" mass="36939">MIYFFISSLFFLILITLMFSKNIFKNIKKIKLFSKNNFFFYFLLFVLFIFIFWLVVYTDQGIKVANQKIIYFLTSYFLEILLSIDNVFAWFFIFKSLKIPLIYQKKVLLYGLWGALILRSIFSFSGSFLFSKWHWILYLFGGFFILTSLKFIFFSNLECDNKEENIKKLWIYKFFRVTENINNENFFVKIEKKIFITPLFVSLILIELSDIVFSVDSIPAALSVNNDLFIIFSSNFFAVLGLRSMYLFTAYFLKNFPIMKYALSLILMFIGFKILIEKFFTFSIFLTLAVILIILITTFLINLIFNLKKC</sequence>
<protein>
    <recommendedName>
        <fullName>Uncharacterized membrane protein BUsg_160</fullName>
    </recommendedName>
</protein>
<name>Y160_BUCAP</name>